<proteinExistence type="evidence at protein level"/>
<protein>
    <recommendedName>
        <fullName>Interleukin-8</fullName>
        <shortName>IL-8</shortName>
    </recommendedName>
    <alternativeName>
        <fullName>C-X-C motif chemokine 8</fullName>
    </alternativeName>
    <alternativeName>
        <fullName>Chemokine (C-X-C motif) ligand 8</fullName>
    </alternativeName>
    <alternativeName>
        <fullName>Neutrophil attractant/activation protein 1</fullName>
        <shortName>NAP-1</shortName>
    </alternativeName>
    <alternativeName>
        <fullName>Permeability factor 1</fullName>
        <shortName>PF1</shortName>
        <shortName>rPF1</shortName>
    </alternativeName>
</protein>
<keyword id="KW-0145">Chemotaxis</keyword>
<keyword id="KW-0164">Citrullination</keyword>
<keyword id="KW-0202">Cytokine</keyword>
<keyword id="KW-0903">Direct protein sequencing</keyword>
<keyword id="KW-1015">Disulfide bond</keyword>
<keyword id="KW-0395">Inflammatory response</keyword>
<keyword id="KW-1185">Reference proteome</keyword>
<keyword id="KW-0964">Secreted</keyword>
<keyword id="KW-0732">Signal</keyword>
<reference key="1">
    <citation type="journal article" date="1991" name="J. Immunol.">
        <title>Neutrophil attractant/activation protein-1 and monocyte chemoattractant protein-1 in rabbit. cDNA cloning and their expression in spleen cells.</title>
        <authorList>
            <person name="Yoshimura T."/>
            <person name="Yuhki N."/>
        </authorList>
    </citation>
    <scope>NUCLEOTIDE SEQUENCE [MRNA]</scope>
    <source>
        <strain>New Zealand white</strain>
        <tissue>Spleen</tissue>
    </source>
</reference>
<reference key="2">
    <citation type="journal article" date="1990" name="Biochem. J.">
        <title>A novel neutrophil chemoattractant generated during an inflammatory reaction in the rabbit peritoneal cavity in vivo. Purification, partial amino acid sequence and structural relationship to interleukin 8.</title>
        <authorList>
            <person name="Beaubien B.C."/>
            <person name="Collins P.D."/>
            <person name="Jose P.J."/>
            <person name="Totty N.F."/>
            <person name="Hsuan J."/>
            <person name="Waterfield M.D."/>
            <person name="Williams T.J."/>
        </authorList>
    </citation>
    <scope>PROTEIN SEQUENCE OF 23-53</scope>
    <source>
        <strain>New Zealand white</strain>
        <tissue>Peritoneal cavity</tissue>
    </source>
</reference>
<feature type="signal peptide" evidence="3">
    <location>
        <begin position="1"/>
        <end position="22"/>
    </location>
</feature>
<feature type="chain" id="PRO_0000005135" description="Interleukin-8">
    <location>
        <begin position="23"/>
        <end position="101"/>
    </location>
</feature>
<feature type="modified residue" description="Citrulline" evidence="1">
    <location>
        <position position="27"/>
    </location>
</feature>
<feature type="disulfide bond" evidence="1">
    <location>
        <begin position="34"/>
        <end position="61"/>
    </location>
</feature>
<feature type="disulfide bond" evidence="1">
    <location>
        <begin position="36"/>
        <end position="77"/>
    </location>
</feature>
<feature type="sequence conflict" description="In Ref. 2; AA sequence." evidence="4" ref="2">
    <original>K</original>
    <variation>I</variation>
    <location>
        <position position="50"/>
    </location>
</feature>
<dbReference type="EMBL" id="M57439">
    <property type="protein sequence ID" value="AAA31422.1"/>
    <property type="molecule type" value="mRNA"/>
</dbReference>
<dbReference type="PIR" id="I46871">
    <property type="entry name" value="I46871"/>
</dbReference>
<dbReference type="RefSeq" id="NP_001075762.1">
    <property type="nucleotide sequence ID" value="NM_001082293.1"/>
</dbReference>
<dbReference type="SMR" id="P19874"/>
<dbReference type="STRING" id="9986.ENSOCUP00000018795"/>
<dbReference type="PaxDb" id="9986-ENSOCUP00000018795"/>
<dbReference type="ABCD" id="P19874">
    <property type="antibodies" value="7 sequenced antibodies"/>
</dbReference>
<dbReference type="Ensembl" id="ENSOCUT00000030077.3">
    <property type="protein sequence ID" value="ENSOCUP00000018795.1"/>
    <property type="gene ID" value="ENSOCUG00000011835.4"/>
</dbReference>
<dbReference type="GeneID" id="100009129"/>
<dbReference type="KEGG" id="ocu:100009129"/>
<dbReference type="CTD" id="3576"/>
<dbReference type="eggNOG" id="ENOG502S7MM">
    <property type="taxonomic scope" value="Eukaryota"/>
</dbReference>
<dbReference type="GeneTree" id="ENSGT00940000160757"/>
<dbReference type="HOGENOM" id="CLU_143902_3_0_1"/>
<dbReference type="InParanoid" id="P19874"/>
<dbReference type="OMA" id="IGTELRC"/>
<dbReference type="OrthoDB" id="9937393at2759"/>
<dbReference type="Proteomes" id="UP000001811">
    <property type="component" value="Chromosome 15"/>
</dbReference>
<dbReference type="Bgee" id="ENSOCUG00000011835">
    <property type="expression patterns" value="Expressed in ovary and 13 other cell types or tissues"/>
</dbReference>
<dbReference type="GO" id="GO:0005615">
    <property type="term" value="C:extracellular space"/>
    <property type="evidence" value="ECO:0007669"/>
    <property type="project" value="UniProtKB-KW"/>
</dbReference>
<dbReference type="GO" id="GO:0008009">
    <property type="term" value="F:chemokine activity"/>
    <property type="evidence" value="ECO:0007669"/>
    <property type="project" value="Ensembl"/>
</dbReference>
<dbReference type="GO" id="GO:0008201">
    <property type="term" value="F:heparin binding"/>
    <property type="evidence" value="ECO:0000250"/>
    <property type="project" value="UniProtKB"/>
</dbReference>
<dbReference type="GO" id="GO:0005153">
    <property type="term" value="F:interleukin-8 receptor binding"/>
    <property type="evidence" value="ECO:0000250"/>
    <property type="project" value="UniProtKB"/>
</dbReference>
<dbReference type="GO" id="GO:0044344">
    <property type="term" value="P:cellular response to fibroblast growth factor stimulus"/>
    <property type="evidence" value="ECO:0007669"/>
    <property type="project" value="Ensembl"/>
</dbReference>
<dbReference type="GO" id="GO:0071347">
    <property type="term" value="P:cellular response to interleukin-1"/>
    <property type="evidence" value="ECO:0007669"/>
    <property type="project" value="Ensembl"/>
</dbReference>
<dbReference type="GO" id="GO:0071222">
    <property type="term" value="P:cellular response to lipopolysaccharide"/>
    <property type="evidence" value="ECO:0007669"/>
    <property type="project" value="Ensembl"/>
</dbReference>
<dbReference type="GO" id="GO:0071356">
    <property type="term" value="P:cellular response to tumor necrosis factor"/>
    <property type="evidence" value="ECO:0007669"/>
    <property type="project" value="Ensembl"/>
</dbReference>
<dbReference type="GO" id="GO:0048566">
    <property type="term" value="P:embryonic digestive tract development"/>
    <property type="evidence" value="ECO:0007669"/>
    <property type="project" value="Ensembl"/>
</dbReference>
<dbReference type="GO" id="GO:0006955">
    <property type="term" value="P:immune response"/>
    <property type="evidence" value="ECO:0007669"/>
    <property type="project" value="InterPro"/>
</dbReference>
<dbReference type="GO" id="GO:0050930">
    <property type="term" value="P:induction of positive chemotaxis"/>
    <property type="evidence" value="ECO:0000250"/>
    <property type="project" value="UniProtKB"/>
</dbReference>
<dbReference type="GO" id="GO:0006954">
    <property type="term" value="P:inflammatory response"/>
    <property type="evidence" value="ECO:0007669"/>
    <property type="project" value="UniProtKB-KW"/>
</dbReference>
<dbReference type="GO" id="GO:0035556">
    <property type="term" value="P:intracellular signal transduction"/>
    <property type="evidence" value="ECO:0007669"/>
    <property type="project" value="Ensembl"/>
</dbReference>
<dbReference type="GO" id="GO:0060354">
    <property type="term" value="P:negative regulation of cell adhesion molecule production"/>
    <property type="evidence" value="ECO:0007669"/>
    <property type="project" value="Ensembl"/>
</dbReference>
<dbReference type="GO" id="GO:0045744">
    <property type="term" value="P:negative regulation of G protein-coupled receptor signaling pathway"/>
    <property type="evidence" value="ECO:0007669"/>
    <property type="project" value="Ensembl"/>
</dbReference>
<dbReference type="GO" id="GO:0010629">
    <property type="term" value="P:negative regulation of gene expression"/>
    <property type="evidence" value="ECO:0007669"/>
    <property type="project" value="Ensembl"/>
</dbReference>
<dbReference type="GO" id="GO:0042119">
    <property type="term" value="P:neutrophil activation"/>
    <property type="evidence" value="ECO:0007669"/>
    <property type="project" value="Ensembl"/>
</dbReference>
<dbReference type="GO" id="GO:0030593">
    <property type="term" value="P:neutrophil chemotaxis"/>
    <property type="evidence" value="ECO:0000250"/>
    <property type="project" value="UniProtKB"/>
</dbReference>
<dbReference type="GO" id="GO:0045766">
    <property type="term" value="P:positive regulation of angiogenesis"/>
    <property type="evidence" value="ECO:0007669"/>
    <property type="project" value="Ensembl"/>
</dbReference>
<dbReference type="GO" id="GO:0010628">
    <property type="term" value="P:positive regulation of gene expression"/>
    <property type="evidence" value="ECO:0007669"/>
    <property type="project" value="Ensembl"/>
</dbReference>
<dbReference type="GO" id="GO:0090023">
    <property type="term" value="P:positive regulation of neutrophil chemotaxis"/>
    <property type="evidence" value="ECO:0000314"/>
    <property type="project" value="UniProtKB"/>
</dbReference>
<dbReference type="GO" id="GO:0031623">
    <property type="term" value="P:receptor internalization"/>
    <property type="evidence" value="ECO:0007669"/>
    <property type="project" value="Ensembl"/>
</dbReference>
<dbReference type="GO" id="GO:0030155">
    <property type="term" value="P:regulation of cell adhesion"/>
    <property type="evidence" value="ECO:0000250"/>
    <property type="project" value="UniProtKB"/>
</dbReference>
<dbReference type="GO" id="GO:2000535">
    <property type="term" value="P:regulation of entry of bacterium into host cell"/>
    <property type="evidence" value="ECO:0007669"/>
    <property type="project" value="Ensembl"/>
</dbReference>
<dbReference type="GO" id="GO:0045091">
    <property type="term" value="P:regulation of single stranded viral RNA replication via double stranded DNA intermediate"/>
    <property type="evidence" value="ECO:0000250"/>
    <property type="project" value="UniProtKB"/>
</dbReference>
<dbReference type="GO" id="GO:0034976">
    <property type="term" value="P:response to endoplasmic reticulum stress"/>
    <property type="evidence" value="ECO:0007669"/>
    <property type="project" value="Ensembl"/>
</dbReference>
<dbReference type="CDD" id="cd00273">
    <property type="entry name" value="Chemokine_CXC"/>
    <property type="match status" value="1"/>
</dbReference>
<dbReference type="FunFam" id="2.40.50.40:FF:000004">
    <property type="entry name" value="C-X-C motif chemokine"/>
    <property type="match status" value="1"/>
</dbReference>
<dbReference type="Gene3D" id="2.40.50.40">
    <property type="match status" value="1"/>
</dbReference>
<dbReference type="InterPro" id="IPR039809">
    <property type="entry name" value="Chemokine_b/g/d"/>
</dbReference>
<dbReference type="InterPro" id="IPR001089">
    <property type="entry name" value="Chemokine_CXC"/>
</dbReference>
<dbReference type="InterPro" id="IPR018048">
    <property type="entry name" value="Chemokine_CXC_CS"/>
</dbReference>
<dbReference type="InterPro" id="IPR001811">
    <property type="entry name" value="Chemokine_IL8-like_dom"/>
</dbReference>
<dbReference type="InterPro" id="IPR033899">
    <property type="entry name" value="CXC_Chemokine_domain"/>
</dbReference>
<dbReference type="InterPro" id="IPR036048">
    <property type="entry name" value="Interleukin_8-like_sf"/>
</dbReference>
<dbReference type="PANTHER" id="PTHR12015:SF200">
    <property type="entry name" value="INTERLEUKIN-8"/>
    <property type="match status" value="1"/>
</dbReference>
<dbReference type="PANTHER" id="PTHR12015">
    <property type="entry name" value="SMALL INDUCIBLE CYTOKINE A"/>
    <property type="match status" value="1"/>
</dbReference>
<dbReference type="Pfam" id="PF00048">
    <property type="entry name" value="IL8"/>
    <property type="match status" value="1"/>
</dbReference>
<dbReference type="PRINTS" id="PR00436">
    <property type="entry name" value="INTERLEUKIN8"/>
</dbReference>
<dbReference type="PRINTS" id="PR00437">
    <property type="entry name" value="SMALLCYTKCXC"/>
</dbReference>
<dbReference type="SMART" id="SM00199">
    <property type="entry name" value="SCY"/>
    <property type="match status" value="1"/>
</dbReference>
<dbReference type="SUPFAM" id="SSF54117">
    <property type="entry name" value="Interleukin 8-like chemokines"/>
    <property type="match status" value="1"/>
</dbReference>
<dbReference type="PROSITE" id="PS00471">
    <property type="entry name" value="SMALL_CYTOKINES_CXC"/>
    <property type="match status" value="1"/>
</dbReference>
<gene>
    <name type="primary">CXCL8</name>
    <name type="synonym">IL8</name>
</gene>
<comment type="function">
    <text evidence="2">Chemotactic factor that mediates inflammatory response by attracting neutrophils, basophils, and T-cells to clear pathogens and protect the host from infection. Also plays an important role in neutrophil activation. Released in response to an inflammatory stimulus, exerts its effect by binding to the G-protein-coupled receptors CXCR1 and CXCR2, primarily found in neutrophils, monocytes and endothelial cells. G-protein heterotrimer (alpha, beta, gamma subunits) constitutively binds to CXCR1/CXCR2 receptor and activation by IL8 leads to beta and gamma subunits release from Galpha (GNAI2 in neutrophils) and activation of several downstream signaling pathways including PI3K and MAPK pathways.</text>
</comment>
<comment type="subunit">
    <text evidence="2">Homodimer. Interacts with TNFAIP6 (via Link domain); this interaction interferes with chemokine binding to glycosaminoglycans.</text>
</comment>
<comment type="subcellular location">
    <subcellularLocation>
        <location>Secreted</location>
    </subcellularLocation>
</comment>
<comment type="PTM">
    <text evidence="1">Citrullination at Arg-27 prevents proteolysis, and dampens tissue inflammation, it also enhances leukocytosis, possibly through impaired chemokine clearance from the blood circulation.</text>
</comment>
<comment type="similarity">
    <text evidence="4">Belongs to the intercrine alpha (chemokine CxC) family.</text>
</comment>
<accession>P19874</accession>
<sequence length="101" mass="11403">MNSKLAVALLATFLLSLTLCEAAVLTRIGTELRCQCIKTHSTPFHPKFIKELRVIESGPHCANSEIIVKLVDGRELCLDPKEKWVQKVVQIFLKRAEQQES</sequence>
<evidence type="ECO:0000250" key="1"/>
<evidence type="ECO:0000250" key="2">
    <source>
        <dbReference type="UniProtKB" id="P10145"/>
    </source>
</evidence>
<evidence type="ECO:0000269" key="3">
    <source>
    </source>
</evidence>
<evidence type="ECO:0000305" key="4"/>
<organism>
    <name type="scientific">Oryctolagus cuniculus</name>
    <name type="common">Rabbit</name>
    <dbReference type="NCBI Taxonomy" id="9986"/>
    <lineage>
        <taxon>Eukaryota</taxon>
        <taxon>Metazoa</taxon>
        <taxon>Chordata</taxon>
        <taxon>Craniata</taxon>
        <taxon>Vertebrata</taxon>
        <taxon>Euteleostomi</taxon>
        <taxon>Mammalia</taxon>
        <taxon>Eutheria</taxon>
        <taxon>Euarchontoglires</taxon>
        <taxon>Glires</taxon>
        <taxon>Lagomorpha</taxon>
        <taxon>Leporidae</taxon>
        <taxon>Oryctolagus</taxon>
    </lineage>
</organism>
<name>IL8_RABIT</name>